<feature type="chain" id="PRO_0000389059" description="Uncharacterized protein ORF115">
    <location>
        <begin position="1"/>
        <end position="115"/>
    </location>
</feature>
<organismHost>
    <name type="scientific">Acidianus convivator</name>
    <dbReference type="NCBI Taxonomy" id="269667"/>
</organismHost>
<dbReference type="EMBL" id="AJ888457">
    <property type="protein sequence ID" value="CAI59890.1"/>
    <property type="molecule type" value="Genomic_DNA"/>
</dbReference>
<dbReference type="RefSeq" id="YP_319853.1">
    <property type="nucleotide sequence ID" value="NC_007409.1"/>
</dbReference>
<dbReference type="GeneID" id="4484246"/>
<dbReference type="KEGG" id="vg:4484246"/>
<dbReference type="Proteomes" id="UP000002150">
    <property type="component" value="Genome"/>
</dbReference>
<sequence length="115" mass="13244">METKLVQSIVIKTEAKVSTVKYRKKVNGERREYKLYFVRFSKDASIKLEKMGVRKLKNVEIIYEDEKYVLGSMSVRIWSRTSNDNTALYGLTLPKPIGEKLAGKKVLVLAEIESK</sequence>
<organism>
    <name type="scientific">Acidianus two-tailed virus</name>
    <name type="common">ATV</name>
    <dbReference type="NCBI Taxonomy" id="315953"/>
    <lineage>
        <taxon>Viruses</taxon>
        <taxon>Viruses incertae sedis</taxon>
        <taxon>Bicaudaviridae</taxon>
        <taxon>Bicaudavirus</taxon>
    </lineage>
</organism>
<name>Y115_ATV</name>
<protein>
    <recommendedName>
        <fullName>Uncharacterized protein ORF115</fullName>
    </recommendedName>
</protein>
<reference key="1">
    <citation type="journal article" date="2005" name="Nature">
        <title>Virology: independent virus development outside a host.</title>
        <authorList>
            <person name="Haring M."/>
            <person name="Vestergaard G."/>
            <person name="Rachel R."/>
            <person name="Chen L."/>
            <person name="Garrett R.A."/>
            <person name="Prangishvili D."/>
        </authorList>
    </citation>
    <scope>NUCLEOTIDE SEQUENCE [GENOMIC DNA]</scope>
</reference>
<accession>Q3V4S4</accession>
<proteinExistence type="predicted"/>
<keyword id="KW-1185">Reference proteome</keyword>